<evidence type="ECO:0000255" key="1">
    <source>
        <dbReference type="HAMAP-Rule" id="MF_00046"/>
    </source>
</evidence>
<organism>
    <name type="scientific">Escherichia coli (strain K12 / DH10B)</name>
    <dbReference type="NCBI Taxonomy" id="316385"/>
    <lineage>
        <taxon>Bacteria</taxon>
        <taxon>Pseudomonadati</taxon>
        <taxon>Pseudomonadota</taxon>
        <taxon>Gammaproteobacteria</taxon>
        <taxon>Enterobacterales</taxon>
        <taxon>Enterobacteriaceae</taxon>
        <taxon>Escherichia</taxon>
    </lineage>
</organism>
<proteinExistence type="inferred from homology"/>
<gene>
    <name evidence="1" type="primary">murC</name>
    <name type="ordered locus">ECDH10B_0073</name>
</gene>
<reference key="1">
    <citation type="journal article" date="2008" name="J. Bacteriol.">
        <title>The complete genome sequence of Escherichia coli DH10B: insights into the biology of a laboratory workhorse.</title>
        <authorList>
            <person name="Durfee T."/>
            <person name="Nelson R."/>
            <person name="Baldwin S."/>
            <person name="Plunkett G. III"/>
            <person name="Burland V."/>
            <person name="Mau B."/>
            <person name="Petrosino J.F."/>
            <person name="Qin X."/>
            <person name="Muzny D.M."/>
            <person name="Ayele M."/>
            <person name="Gibbs R.A."/>
            <person name="Csorgo B."/>
            <person name="Posfai G."/>
            <person name="Weinstock G.M."/>
            <person name="Blattner F.R."/>
        </authorList>
    </citation>
    <scope>NUCLEOTIDE SEQUENCE [LARGE SCALE GENOMIC DNA]</scope>
    <source>
        <strain>K12 / DH10B</strain>
    </source>
</reference>
<keyword id="KW-0067">ATP-binding</keyword>
<keyword id="KW-0131">Cell cycle</keyword>
<keyword id="KW-0132">Cell division</keyword>
<keyword id="KW-0133">Cell shape</keyword>
<keyword id="KW-0961">Cell wall biogenesis/degradation</keyword>
<keyword id="KW-0963">Cytoplasm</keyword>
<keyword id="KW-0436">Ligase</keyword>
<keyword id="KW-0547">Nucleotide-binding</keyword>
<keyword id="KW-0573">Peptidoglycan synthesis</keyword>
<protein>
    <recommendedName>
        <fullName evidence="1">UDP-N-acetylmuramate--L-alanine ligase</fullName>
        <ecNumber evidence="1">6.3.2.8</ecNumber>
    </recommendedName>
    <alternativeName>
        <fullName evidence="1">UDP-N-acetylmuramoyl-L-alanine synthetase</fullName>
    </alternativeName>
</protein>
<accession>B1XC68</accession>
<name>MURC_ECODH</name>
<comment type="function">
    <text evidence="1">Cell wall formation.</text>
</comment>
<comment type="catalytic activity">
    <reaction evidence="1">
        <text>UDP-N-acetyl-alpha-D-muramate + L-alanine + ATP = UDP-N-acetyl-alpha-D-muramoyl-L-alanine + ADP + phosphate + H(+)</text>
        <dbReference type="Rhea" id="RHEA:23372"/>
        <dbReference type="ChEBI" id="CHEBI:15378"/>
        <dbReference type="ChEBI" id="CHEBI:30616"/>
        <dbReference type="ChEBI" id="CHEBI:43474"/>
        <dbReference type="ChEBI" id="CHEBI:57972"/>
        <dbReference type="ChEBI" id="CHEBI:70757"/>
        <dbReference type="ChEBI" id="CHEBI:83898"/>
        <dbReference type="ChEBI" id="CHEBI:456216"/>
        <dbReference type="EC" id="6.3.2.8"/>
    </reaction>
</comment>
<comment type="pathway">
    <text evidence="1">Cell wall biogenesis; peptidoglycan biosynthesis.</text>
</comment>
<comment type="subcellular location">
    <subcellularLocation>
        <location evidence="1">Cytoplasm</location>
    </subcellularLocation>
</comment>
<comment type="similarity">
    <text evidence="1">Belongs to the MurCDEF family.</text>
</comment>
<dbReference type="EC" id="6.3.2.8" evidence="1"/>
<dbReference type="EMBL" id="CP000948">
    <property type="protein sequence ID" value="ACB01272.1"/>
    <property type="molecule type" value="Genomic_DNA"/>
</dbReference>
<dbReference type="RefSeq" id="WP_001096049.1">
    <property type="nucleotide sequence ID" value="NC_010473.1"/>
</dbReference>
<dbReference type="SMR" id="B1XC68"/>
<dbReference type="GeneID" id="75202092"/>
<dbReference type="KEGG" id="ecd:ECDH10B_0073"/>
<dbReference type="HOGENOM" id="CLU_028104_2_2_6"/>
<dbReference type="UniPathway" id="UPA00219"/>
<dbReference type="GO" id="GO:0005737">
    <property type="term" value="C:cytoplasm"/>
    <property type="evidence" value="ECO:0007669"/>
    <property type="project" value="UniProtKB-SubCell"/>
</dbReference>
<dbReference type="GO" id="GO:0005524">
    <property type="term" value="F:ATP binding"/>
    <property type="evidence" value="ECO:0007669"/>
    <property type="project" value="UniProtKB-UniRule"/>
</dbReference>
<dbReference type="GO" id="GO:0008763">
    <property type="term" value="F:UDP-N-acetylmuramate-L-alanine ligase activity"/>
    <property type="evidence" value="ECO:0007669"/>
    <property type="project" value="UniProtKB-UniRule"/>
</dbReference>
<dbReference type="GO" id="GO:0051301">
    <property type="term" value="P:cell division"/>
    <property type="evidence" value="ECO:0007669"/>
    <property type="project" value="UniProtKB-KW"/>
</dbReference>
<dbReference type="GO" id="GO:0071555">
    <property type="term" value="P:cell wall organization"/>
    <property type="evidence" value="ECO:0007669"/>
    <property type="project" value="UniProtKB-KW"/>
</dbReference>
<dbReference type="GO" id="GO:0009252">
    <property type="term" value="P:peptidoglycan biosynthetic process"/>
    <property type="evidence" value="ECO:0007669"/>
    <property type="project" value="UniProtKB-UniRule"/>
</dbReference>
<dbReference type="GO" id="GO:0008360">
    <property type="term" value="P:regulation of cell shape"/>
    <property type="evidence" value="ECO:0007669"/>
    <property type="project" value="UniProtKB-KW"/>
</dbReference>
<dbReference type="FunFam" id="3.40.1190.10:FF:000001">
    <property type="entry name" value="UDP-N-acetylmuramate--L-alanine ligase"/>
    <property type="match status" value="1"/>
</dbReference>
<dbReference type="FunFam" id="3.40.50.720:FF:000046">
    <property type="entry name" value="UDP-N-acetylmuramate--L-alanine ligase"/>
    <property type="match status" value="1"/>
</dbReference>
<dbReference type="FunFam" id="3.90.190.20:FF:000001">
    <property type="entry name" value="UDP-N-acetylmuramate--L-alanine ligase"/>
    <property type="match status" value="1"/>
</dbReference>
<dbReference type="Gene3D" id="3.90.190.20">
    <property type="entry name" value="Mur ligase, C-terminal domain"/>
    <property type="match status" value="1"/>
</dbReference>
<dbReference type="Gene3D" id="3.40.1190.10">
    <property type="entry name" value="Mur-like, catalytic domain"/>
    <property type="match status" value="1"/>
</dbReference>
<dbReference type="Gene3D" id="3.40.50.720">
    <property type="entry name" value="NAD(P)-binding Rossmann-like Domain"/>
    <property type="match status" value="1"/>
</dbReference>
<dbReference type="HAMAP" id="MF_00046">
    <property type="entry name" value="MurC"/>
    <property type="match status" value="1"/>
</dbReference>
<dbReference type="InterPro" id="IPR036565">
    <property type="entry name" value="Mur-like_cat_sf"/>
</dbReference>
<dbReference type="InterPro" id="IPR004101">
    <property type="entry name" value="Mur_ligase_C"/>
</dbReference>
<dbReference type="InterPro" id="IPR036615">
    <property type="entry name" value="Mur_ligase_C_dom_sf"/>
</dbReference>
<dbReference type="InterPro" id="IPR013221">
    <property type="entry name" value="Mur_ligase_cen"/>
</dbReference>
<dbReference type="InterPro" id="IPR000713">
    <property type="entry name" value="Mur_ligase_N"/>
</dbReference>
<dbReference type="InterPro" id="IPR050061">
    <property type="entry name" value="MurCDEF_pg_biosynth"/>
</dbReference>
<dbReference type="InterPro" id="IPR005758">
    <property type="entry name" value="UDP-N-AcMur_Ala_ligase_MurC"/>
</dbReference>
<dbReference type="NCBIfam" id="TIGR01082">
    <property type="entry name" value="murC"/>
    <property type="match status" value="1"/>
</dbReference>
<dbReference type="PANTHER" id="PTHR43445:SF3">
    <property type="entry name" value="UDP-N-ACETYLMURAMATE--L-ALANINE LIGASE"/>
    <property type="match status" value="1"/>
</dbReference>
<dbReference type="PANTHER" id="PTHR43445">
    <property type="entry name" value="UDP-N-ACETYLMURAMATE--L-ALANINE LIGASE-RELATED"/>
    <property type="match status" value="1"/>
</dbReference>
<dbReference type="Pfam" id="PF01225">
    <property type="entry name" value="Mur_ligase"/>
    <property type="match status" value="1"/>
</dbReference>
<dbReference type="Pfam" id="PF02875">
    <property type="entry name" value="Mur_ligase_C"/>
    <property type="match status" value="1"/>
</dbReference>
<dbReference type="Pfam" id="PF08245">
    <property type="entry name" value="Mur_ligase_M"/>
    <property type="match status" value="1"/>
</dbReference>
<dbReference type="SUPFAM" id="SSF51984">
    <property type="entry name" value="MurCD N-terminal domain"/>
    <property type="match status" value="1"/>
</dbReference>
<dbReference type="SUPFAM" id="SSF53623">
    <property type="entry name" value="MurD-like peptide ligases, catalytic domain"/>
    <property type="match status" value="1"/>
</dbReference>
<dbReference type="SUPFAM" id="SSF53244">
    <property type="entry name" value="MurD-like peptide ligases, peptide-binding domain"/>
    <property type="match status" value="1"/>
</dbReference>
<feature type="chain" id="PRO_1000091100" description="UDP-N-acetylmuramate--L-alanine ligase">
    <location>
        <begin position="1"/>
        <end position="491"/>
    </location>
</feature>
<feature type="binding site" evidence="1">
    <location>
        <begin position="126"/>
        <end position="132"/>
    </location>
    <ligand>
        <name>ATP</name>
        <dbReference type="ChEBI" id="CHEBI:30616"/>
    </ligand>
</feature>
<sequence length="491" mass="53626">MNTQQLAKLRSIVPEMRRVRHIHFVGIGGAGMGGIAEVLANEGYQISGSDLAPNPVTQQLMNLGATIYFNHRPENVRDASVVVVSSAISADNPEIVAAHEARIPVIRRAEMLAELMRFRHGIAIAGTHGKTTTTAMVSSIYAEAGLDPTFVNGGLVKAAGVHARLGHGRYLIAEADESDASFLHLQPMVAIVTNIEADHMDTYQGDFENLKQTFINFLHNLPFYGRAVMCVDDPVIRELLPRVGRQTTTYGFSEDADVRVEDYQQIGPQGHFTLLRQDKEPMRVTLNAPGRHNALNAAAAVAVATEEGIDDEAILRALESFQGTGRRFDFLGEFPLEPVNGKSGTAMLVDDYGHHPTEVDATIKAARAGWPDKNLVMLFQPHRFTRTRDLYDDFANVLTQVDTLLMLEVYPAGEAPIPGADSRSLCRTIRGRGKIDPILVPDPARVAEMLAPVLTGNDLILVQGAGNIGKIARSLAEIKLKPQTPEEEQHD</sequence>